<dbReference type="EMBL" id="CP000025">
    <property type="protein sequence ID" value="AAW36280.1"/>
    <property type="molecule type" value="Genomic_DNA"/>
</dbReference>
<dbReference type="RefSeq" id="WP_002779428.1">
    <property type="nucleotide sequence ID" value="NC_003912.7"/>
</dbReference>
<dbReference type="SMR" id="Q5HSA7"/>
<dbReference type="GeneID" id="98395681"/>
<dbReference type="KEGG" id="cjr:CJE1858"/>
<dbReference type="HOGENOM" id="CLU_065898_2_2_7"/>
<dbReference type="GO" id="GO:0015935">
    <property type="term" value="C:small ribosomal subunit"/>
    <property type="evidence" value="ECO:0007669"/>
    <property type="project" value="InterPro"/>
</dbReference>
<dbReference type="GO" id="GO:0019843">
    <property type="term" value="F:rRNA binding"/>
    <property type="evidence" value="ECO:0007669"/>
    <property type="project" value="UniProtKB-UniRule"/>
</dbReference>
<dbReference type="GO" id="GO:0003735">
    <property type="term" value="F:structural constituent of ribosome"/>
    <property type="evidence" value="ECO:0007669"/>
    <property type="project" value="InterPro"/>
</dbReference>
<dbReference type="GO" id="GO:0006412">
    <property type="term" value="P:translation"/>
    <property type="evidence" value="ECO:0007669"/>
    <property type="project" value="UniProtKB-UniRule"/>
</dbReference>
<dbReference type="FunFam" id="3.30.160.20:FF:000001">
    <property type="entry name" value="30S ribosomal protein S5"/>
    <property type="match status" value="1"/>
</dbReference>
<dbReference type="FunFam" id="3.30.230.10:FF:000024">
    <property type="entry name" value="30S ribosomal protein S5"/>
    <property type="match status" value="1"/>
</dbReference>
<dbReference type="Gene3D" id="3.30.160.20">
    <property type="match status" value="1"/>
</dbReference>
<dbReference type="Gene3D" id="3.30.230.10">
    <property type="match status" value="1"/>
</dbReference>
<dbReference type="HAMAP" id="MF_01307_B">
    <property type="entry name" value="Ribosomal_uS5_B"/>
    <property type="match status" value="1"/>
</dbReference>
<dbReference type="InterPro" id="IPR020568">
    <property type="entry name" value="Ribosomal_Su5_D2-typ_SF"/>
</dbReference>
<dbReference type="InterPro" id="IPR000851">
    <property type="entry name" value="Ribosomal_uS5"/>
</dbReference>
<dbReference type="InterPro" id="IPR005712">
    <property type="entry name" value="Ribosomal_uS5_bac-type"/>
</dbReference>
<dbReference type="InterPro" id="IPR005324">
    <property type="entry name" value="Ribosomal_uS5_C"/>
</dbReference>
<dbReference type="InterPro" id="IPR013810">
    <property type="entry name" value="Ribosomal_uS5_N"/>
</dbReference>
<dbReference type="InterPro" id="IPR018192">
    <property type="entry name" value="Ribosomal_uS5_N_CS"/>
</dbReference>
<dbReference type="InterPro" id="IPR014721">
    <property type="entry name" value="Ribsml_uS5_D2-typ_fold_subgr"/>
</dbReference>
<dbReference type="NCBIfam" id="TIGR01021">
    <property type="entry name" value="rpsE_bact"/>
    <property type="match status" value="1"/>
</dbReference>
<dbReference type="PANTHER" id="PTHR48277">
    <property type="entry name" value="MITOCHONDRIAL RIBOSOMAL PROTEIN S5"/>
    <property type="match status" value="1"/>
</dbReference>
<dbReference type="PANTHER" id="PTHR48277:SF1">
    <property type="entry name" value="MITOCHONDRIAL RIBOSOMAL PROTEIN S5"/>
    <property type="match status" value="1"/>
</dbReference>
<dbReference type="Pfam" id="PF00333">
    <property type="entry name" value="Ribosomal_S5"/>
    <property type="match status" value="1"/>
</dbReference>
<dbReference type="Pfam" id="PF03719">
    <property type="entry name" value="Ribosomal_S5_C"/>
    <property type="match status" value="1"/>
</dbReference>
<dbReference type="SUPFAM" id="SSF54768">
    <property type="entry name" value="dsRNA-binding domain-like"/>
    <property type="match status" value="1"/>
</dbReference>
<dbReference type="SUPFAM" id="SSF54211">
    <property type="entry name" value="Ribosomal protein S5 domain 2-like"/>
    <property type="match status" value="1"/>
</dbReference>
<dbReference type="PROSITE" id="PS00585">
    <property type="entry name" value="RIBOSOMAL_S5"/>
    <property type="match status" value="1"/>
</dbReference>
<dbReference type="PROSITE" id="PS50881">
    <property type="entry name" value="S5_DSRBD"/>
    <property type="match status" value="1"/>
</dbReference>
<protein>
    <recommendedName>
        <fullName evidence="1">Small ribosomal subunit protein uS5</fullName>
    </recommendedName>
    <alternativeName>
        <fullName evidence="2">30S ribosomal protein S5</fullName>
    </alternativeName>
</protein>
<sequence length="147" mass="15796">MEKYNREEFEEVIVDIGRVTKVVKGGRRFRFTALVIVGNRKGLVGVGYGKAKEVPDAIRKAVDDAFKNIVEVKTKGSTIAHDVEVKYNASRILLKPASEGTGVIAGGSTRPIVELAGIKDILTKSLGSNNSANVVRATIKALTMLKG</sequence>
<reference key="1">
    <citation type="journal article" date="2005" name="PLoS Biol.">
        <title>Major structural differences and novel potential virulence mechanisms from the genomes of multiple Campylobacter species.</title>
        <authorList>
            <person name="Fouts D.E."/>
            <person name="Mongodin E.F."/>
            <person name="Mandrell R.E."/>
            <person name="Miller W.G."/>
            <person name="Rasko D.A."/>
            <person name="Ravel J."/>
            <person name="Brinkac L.M."/>
            <person name="DeBoy R.T."/>
            <person name="Parker C.T."/>
            <person name="Daugherty S.C."/>
            <person name="Dodson R.J."/>
            <person name="Durkin A.S."/>
            <person name="Madupu R."/>
            <person name="Sullivan S.A."/>
            <person name="Shetty J.U."/>
            <person name="Ayodeji M.A."/>
            <person name="Shvartsbeyn A."/>
            <person name="Schatz M.C."/>
            <person name="Badger J.H."/>
            <person name="Fraser C.M."/>
            <person name="Nelson K.E."/>
        </authorList>
    </citation>
    <scope>NUCLEOTIDE SEQUENCE [LARGE SCALE GENOMIC DNA]</scope>
    <source>
        <strain>RM1221</strain>
    </source>
</reference>
<proteinExistence type="inferred from homology"/>
<accession>Q5HSA7</accession>
<gene>
    <name evidence="1" type="primary">rpsE</name>
    <name type="ordered locus">CJE1858</name>
</gene>
<evidence type="ECO:0000255" key="1">
    <source>
        <dbReference type="HAMAP-Rule" id="MF_01307"/>
    </source>
</evidence>
<evidence type="ECO:0000305" key="2"/>
<comment type="function">
    <text evidence="1">With S4 and S12 plays an important role in translational accuracy.</text>
</comment>
<comment type="function">
    <text evidence="1">Located at the back of the 30S subunit body where it stabilizes the conformation of the head with respect to the body.</text>
</comment>
<comment type="subunit">
    <text evidence="1">Part of the 30S ribosomal subunit. Contacts proteins S4 and S8.</text>
</comment>
<comment type="domain">
    <text>The N-terminal domain interacts with the head of the 30S subunit; the C-terminal domain interacts with the body and contacts protein S4. The interaction surface between S4 and S5 is involved in control of translational fidelity.</text>
</comment>
<comment type="similarity">
    <text evidence="1">Belongs to the universal ribosomal protein uS5 family.</text>
</comment>
<keyword id="KW-0687">Ribonucleoprotein</keyword>
<keyword id="KW-0689">Ribosomal protein</keyword>
<keyword id="KW-0694">RNA-binding</keyword>
<keyword id="KW-0699">rRNA-binding</keyword>
<name>RS5_CAMJR</name>
<organism>
    <name type="scientific">Campylobacter jejuni (strain RM1221)</name>
    <dbReference type="NCBI Taxonomy" id="195099"/>
    <lineage>
        <taxon>Bacteria</taxon>
        <taxon>Pseudomonadati</taxon>
        <taxon>Campylobacterota</taxon>
        <taxon>Epsilonproteobacteria</taxon>
        <taxon>Campylobacterales</taxon>
        <taxon>Campylobacteraceae</taxon>
        <taxon>Campylobacter</taxon>
    </lineage>
</organism>
<feature type="chain" id="PRO_0000131492" description="Small ribosomal subunit protein uS5">
    <location>
        <begin position="1"/>
        <end position="147"/>
    </location>
</feature>
<feature type="domain" description="S5 DRBM" evidence="1">
    <location>
        <begin position="9"/>
        <end position="72"/>
    </location>
</feature>